<sequence length="111" mass="11911">MGLLLLLVGIGGGFGAMARFALTQATASISKQIPLGILLCNIIGSLIIGMMAAFLIETKLFNEDVSTYVRFLLVTGFLGGFTTFSSFSLDILNLLQRGEIFIAIGYIWLVS</sequence>
<reference key="1">
    <citation type="journal article" date="2009" name="PLoS ONE">
        <title>Complete genome sequence of Francisella tularensis subspecies holarctica FTNF002-00.</title>
        <authorList>
            <person name="Barabote R.D."/>
            <person name="Xie G."/>
            <person name="Brettin T.S."/>
            <person name="Hinrichs S.H."/>
            <person name="Fey P.D."/>
            <person name="Jay J.J."/>
            <person name="Engle J.L."/>
            <person name="Godbole S.D."/>
            <person name="Noronha J.M."/>
            <person name="Scheuermann R.H."/>
            <person name="Zhou L.W."/>
            <person name="Lion C."/>
            <person name="Dempsey M.P."/>
        </authorList>
    </citation>
    <scope>NUCLEOTIDE SEQUENCE [LARGE SCALE GENOMIC DNA]</scope>
    <source>
        <strain>FTNF002-00 / FTA</strain>
    </source>
</reference>
<dbReference type="EMBL" id="CP000803">
    <property type="protein sequence ID" value="ABU60630.1"/>
    <property type="molecule type" value="Genomic_DNA"/>
</dbReference>
<dbReference type="SMR" id="A7N9H7"/>
<dbReference type="KEGG" id="fta:FTA_0153"/>
<dbReference type="HOGENOM" id="CLU_114342_2_1_6"/>
<dbReference type="GO" id="GO:0005886">
    <property type="term" value="C:plasma membrane"/>
    <property type="evidence" value="ECO:0007669"/>
    <property type="project" value="UniProtKB-SubCell"/>
</dbReference>
<dbReference type="GO" id="GO:0062054">
    <property type="term" value="F:fluoride channel activity"/>
    <property type="evidence" value="ECO:0007669"/>
    <property type="project" value="UniProtKB-UniRule"/>
</dbReference>
<dbReference type="GO" id="GO:0046872">
    <property type="term" value="F:metal ion binding"/>
    <property type="evidence" value="ECO:0007669"/>
    <property type="project" value="UniProtKB-KW"/>
</dbReference>
<dbReference type="GO" id="GO:0140114">
    <property type="term" value="P:cellular detoxification of fluoride"/>
    <property type="evidence" value="ECO:0007669"/>
    <property type="project" value="UniProtKB-UniRule"/>
</dbReference>
<dbReference type="HAMAP" id="MF_00454">
    <property type="entry name" value="FluC"/>
    <property type="match status" value="1"/>
</dbReference>
<dbReference type="InterPro" id="IPR003691">
    <property type="entry name" value="FluC"/>
</dbReference>
<dbReference type="NCBIfam" id="TIGR00494">
    <property type="entry name" value="crcB"/>
    <property type="match status" value="1"/>
</dbReference>
<dbReference type="PANTHER" id="PTHR28259">
    <property type="entry name" value="FLUORIDE EXPORT PROTEIN 1-RELATED"/>
    <property type="match status" value="1"/>
</dbReference>
<dbReference type="PANTHER" id="PTHR28259:SF1">
    <property type="entry name" value="FLUORIDE EXPORT PROTEIN 1-RELATED"/>
    <property type="match status" value="1"/>
</dbReference>
<dbReference type="Pfam" id="PF02537">
    <property type="entry name" value="CRCB"/>
    <property type="match status" value="1"/>
</dbReference>
<feature type="chain" id="PRO_1000026388" description="Fluoride-specific ion channel FluC">
    <location>
        <begin position="1"/>
        <end position="111"/>
    </location>
</feature>
<feature type="transmembrane region" description="Helical" evidence="1">
    <location>
        <begin position="2"/>
        <end position="22"/>
    </location>
</feature>
<feature type="transmembrane region" description="Helical" evidence="1">
    <location>
        <begin position="36"/>
        <end position="56"/>
    </location>
</feature>
<feature type="transmembrane region" description="Helical" evidence="1">
    <location>
        <begin position="71"/>
        <end position="91"/>
    </location>
</feature>
<feature type="binding site" evidence="1">
    <location>
        <position position="79"/>
    </location>
    <ligand>
        <name>Na(+)</name>
        <dbReference type="ChEBI" id="CHEBI:29101"/>
        <note>structural</note>
    </ligand>
</feature>
<feature type="binding site" evidence="1">
    <location>
        <position position="82"/>
    </location>
    <ligand>
        <name>Na(+)</name>
        <dbReference type="ChEBI" id="CHEBI:29101"/>
        <note>structural</note>
    </ligand>
</feature>
<protein>
    <recommendedName>
        <fullName evidence="1">Fluoride-specific ion channel FluC</fullName>
    </recommendedName>
</protein>
<name>FLUC_FRATF</name>
<keyword id="KW-0997">Cell inner membrane</keyword>
<keyword id="KW-1003">Cell membrane</keyword>
<keyword id="KW-0407">Ion channel</keyword>
<keyword id="KW-0406">Ion transport</keyword>
<keyword id="KW-0472">Membrane</keyword>
<keyword id="KW-0479">Metal-binding</keyword>
<keyword id="KW-0915">Sodium</keyword>
<keyword id="KW-0812">Transmembrane</keyword>
<keyword id="KW-1133">Transmembrane helix</keyword>
<keyword id="KW-0813">Transport</keyword>
<accession>A7N9H7</accession>
<proteinExistence type="inferred from homology"/>
<comment type="function">
    <text evidence="1">Fluoride-specific ion channel. Important for reducing fluoride concentration in the cell, thus reducing its toxicity.</text>
</comment>
<comment type="catalytic activity">
    <reaction evidence="1">
        <text>fluoride(in) = fluoride(out)</text>
        <dbReference type="Rhea" id="RHEA:76159"/>
        <dbReference type="ChEBI" id="CHEBI:17051"/>
    </reaction>
    <physiologicalReaction direction="left-to-right" evidence="1">
        <dbReference type="Rhea" id="RHEA:76160"/>
    </physiologicalReaction>
</comment>
<comment type="activity regulation">
    <text evidence="1">Na(+) is not transported, but it plays an essential structural role and its presence is essential for fluoride channel function.</text>
</comment>
<comment type="subcellular location">
    <subcellularLocation>
        <location evidence="1">Cell inner membrane</location>
        <topology evidence="1">Multi-pass membrane protein</topology>
    </subcellularLocation>
</comment>
<comment type="similarity">
    <text evidence="1">Belongs to the fluoride channel Fluc/FEX (TC 1.A.43) family.</text>
</comment>
<organism>
    <name type="scientific">Francisella tularensis subsp. holarctica (strain FTNF002-00 / FTA)</name>
    <dbReference type="NCBI Taxonomy" id="458234"/>
    <lineage>
        <taxon>Bacteria</taxon>
        <taxon>Pseudomonadati</taxon>
        <taxon>Pseudomonadota</taxon>
        <taxon>Gammaproteobacteria</taxon>
        <taxon>Thiotrichales</taxon>
        <taxon>Francisellaceae</taxon>
        <taxon>Francisella</taxon>
    </lineage>
</organism>
<gene>
    <name evidence="1" type="primary">fluC</name>
    <name evidence="1" type="synonym">crcB</name>
    <name type="ordered locus">FTA_0153</name>
</gene>
<evidence type="ECO:0000255" key="1">
    <source>
        <dbReference type="HAMAP-Rule" id="MF_00454"/>
    </source>
</evidence>